<feature type="chain" id="PRO_1000214387" description="Small ribosomal subunit protein uS13">
    <location>
        <begin position="1"/>
        <end position="126"/>
    </location>
</feature>
<feature type="region of interest" description="Disordered" evidence="2">
    <location>
        <begin position="92"/>
        <end position="126"/>
    </location>
</feature>
<evidence type="ECO:0000255" key="1">
    <source>
        <dbReference type="HAMAP-Rule" id="MF_01315"/>
    </source>
</evidence>
<evidence type="ECO:0000256" key="2">
    <source>
        <dbReference type="SAM" id="MobiDB-lite"/>
    </source>
</evidence>
<evidence type="ECO:0000305" key="3"/>
<protein>
    <recommendedName>
        <fullName evidence="1">Small ribosomal subunit protein uS13</fullName>
    </recommendedName>
    <alternativeName>
        <fullName evidence="3">30S ribosomal protein S13</fullName>
    </alternativeName>
</protein>
<comment type="function">
    <text evidence="1">Located at the top of the head of the 30S subunit, it contacts several helices of the 16S rRNA. In the 70S ribosome it contacts the 23S rRNA (bridge B1a) and protein L5 of the 50S subunit (bridge B1b), connecting the 2 subunits; these bridges are implicated in subunit movement. Contacts the tRNAs in the A and P-sites.</text>
</comment>
<comment type="subunit">
    <text evidence="1">Part of the 30S ribosomal subunit. Forms a loose heterodimer with protein S19. Forms two bridges to the 50S subunit in the 70S ribosome.</text>
</comment>
<comment type="similarity">
    <text evidence="1">Belongs to the universal ribosomal protein uS13 family.</text>
</comment>
<accession>C1CXD7</accession>
<gene>
    <name evidence="1" type="primary">rpsM</name>
    <name type="ordered locus">Deide_18660</name>
</gene>
<reference key="1">
    <citation type="journal article" date="2009" name="PLoS Genet.">
        <title>Alliance of proteomics and genomics to unravel the specificities of Sahara bacterium Deinococcus deserti.</title>
        <authorList>
            <person name="de Groot A."/>
            <person name="Dulermo R."/>
            <person name="Ortet P."/>
            <person name="Blanchard L."/>
            <person name="Guerin P."/>
            <person name="Fernandez B."/>
            <person name="Vacherie B."/>
            <person name="Dossat C."/>
            <person name="Jolivet E."/>
            <person name="Siguier P."/>
            <person name="Chandler M."/>
            <person name="Barakat M."/>
            <person name="Dedieu A."/>
            <person name="Barbe V."/>
            <person name="Heulin T."/>
            <person name="Sommer S."/>
            <person name="Achouak W."/>
            <person name="Armengaud J."/>
        </authorList>
    </citation>
    <scope>NUCLEOTIDE SEQUENCE [LARGE SCALE GENOMIC DNA]</scope>
    <source>
        <strain>DSM 17065 / CIP 109153 / LMG 22923 / VCD115</strain>
    </source>
</reference>
<organism>
    <name type="scientific">Deinococcus deserti (strain DSM 17065 / CIP 109153 / LMG 22923 / VCD115)</name>
    <dbReference type="NCBI Taxonomy" id="546414"/>
    <lineage>
        <taxon>Bacteria</taxon>
        <taxon>Thermotogati</taxon>
        <taxon>Deinococcota</taxon>
        <taxon>Deinococci</taxon>
        <taxon>Deinococcales</taxon>
        <taxon>Deinococcaceae</taxon>
        <taxon>Deinococcus</taxon>
    </lineage>
</organism>
<proteinExistence type="inferred from homology"/>
<sequence>MARVAGVDLPREKRIEIALTYIYGIGLTRSKEVLAQTGISADTRVKNLTEAEQSTLRDAIEKTFKVEGDLRSEVGQNIKRLMDIGAYRGLRHRRGLPVRGQRTKTNARTRKGPKKTVAGKKKATRK</sequence>
<keyword id="KW-1185">Reference proteome</keyword>
<keyword id="KW-0687">Ribonucleoprotein</keyword>
<keyword id="KW-0689">Ribosomal protein</keyword>
<keyword id="KW-0694">RNA-binding</keyword>
<keyword id="KW-0699">rRNA-binding</keyword>
<keyword id="KW-0820">tRNA-binding</keyword>
<dbReference type="EMBL" id="CP001114">
    <property type="protein sequence ID" value="ACO46854.1"/>
    <property type="molecule type" value="Genomic_DNA"/>
</dbReference>
<dbReference type="RefSeq" id="WP_012693976.1">
    <property type="nucleotide sequence ID" value="NC_012526.1"/>
</dbReference>
<dbReference type="SMR" id="C1CXD7"/>
<dbReference type="STRING" id="546414.Deide_18660"/>
<dbReference type="PaxDb" id="546414-Deide_18660"/>
<dbReference type="KEGG" id="ddr:Deide_18660"/>
<dbReference type="eggNOG" id="COG0099">
    <property type="taxonomic scope" value="Bacteria"/>
</dbReference>
<dbReference type="HOGENOM" id="CLU_103849_1_2_0"/>
<dbReference type="OrthoDB" id="9803610at2"/>
<dbReference type="Proteomes" id="UP000002208">
    <property type="component" value="Chromosome"/>
</dbReference>
<dbReference type="GO" id="GO:0005829">
    <property type="term" value="C:cytosol"/>
    <property type="evidence" value="ECO:0007669"/>
    <property type="project" value="TreeGrafter"/>
</dbReference>
<dbReference type="GO" id="GO:0015935">
    <property type="term" value="C:small ribosomal subunit"/>
    <property type="evidence" value="ECO:0007669"/>
    <property type="project" value="TreeGrafter"/>
</dbReference>
<dbReference type="GO" id="GO:0019843">
    <property type="term" value="F:rRNA binding"/>
    <property type="evidence" value="ECO:0007669"/>
    <property type="project" value="UniProtKB-UniRule"/>
</dbReference>
<dbReference type="GO" id="GO:0003735">
    <property type="term" value="F:structural constituent of ribosome"/>
    <property type="evidence" value="ECO:0007669"/>
    <property type="project" value="InterPro"/>
</dbReference>
<dbReference type="GO" id="GO:0000049">
    <property type="term" value="F:tRNA binding"/>
    <property type="evidence" value="ECO:0007669"/>
    <property type="project" value="UniProtKB-UniRule"/>
</dbReference>
<dbReference type="GO" id="GO:0006412">
    <property type="term" value="P:translation"/>
    <property type="evidence" value="ECO:0007669"/>
    <property type="project" value="UniProtKB-UniRule"/>
</dbReference>
<dbReference type="FunFam" id="1.10.8.50:FF:000001">
    <property type="entry name" value="30S ribosomal protein S13"/>
    <property type="match status" value="1"/>
</dbReference>
<dbReference type="FunFam" id="4.10.910.10:FF:000001">
    <property type="entry name" value="30S ribosomal protein S13"/>
    <property type="match status" value="1"/>
</dbReference>
<dbReference type="Gene3D" id="1.10.8.50">
    <property type="match status" value="1"/>
</dbReference>
<dbReference type="Gene3D" id="4.10.910.10">
    <property type="entry name" value="30s ribosomal protein s13, domain 2"/>
    <property type="match status" value="1"/>
</dbReference>
<dbReference type="HAMAP" id="MF_01315">
    <property type="entry name" value="Ribosomal_uS13"/>
    <property type="match status" value="1"/>
</dbReference>
<dbReference type="InterPro" id="IPR027437">
    <property type="entry name" value="Rbsml_uS13_C"/>
</dbReference>
<dbReference type="InterPro" id="IPR001892">
    <property type="entry name" value="Ribosomal_uS13"/>
</dbReference>
<dbReference type="InterPro" id="IPR010979">
    <property type="entry name" value="Ribosomal_uS13-like_H2TH"/>
</dbReference>
<dbReference type="InterPro" id="IPR019980">
    <property type="entry name" value="Ribosomal_uS13_bac-type"/>
</dbReference>
<dbReference type="InterPro" id="IPR018269">
    <property type="entry name" value="Ribosomal_uS13_CS"/>
</dbReference>
<dbReference type="NCBIfam" id="TIGR03631">
    <property type="entry name" value="uS13_bact"/>
    <property type="match status" value="1"/>
</dbReference>
<dbReference type="PANTHER" id="PTHR10871">
    <property type="entry name" value="30S RIBOSOMAL PROTEIN S13/40S RIBOSOMAL PROTEIN S18"/>
    <property type="match status" value="1"/>
</dbReference>
<dbReference type="PANTHER" id="PTHR10871:SF1">
    <property type="entry name" value="SMALL RIBOSOMAL SUBUNIT PROTEIN US13M"/>
    <property type="match status" value="1"/>
</dbReference>
<dbReference type="Pfam" id="PF00416">
    <property type="entry name" value="Ribosomal_S13"/>
    <property type="match status" value="1"/>
</dbReference>
<dbReference type="PIRSF" id="PIRSF002134">
    <property type="entry name" value="Ribosomal_S13"/>
    <property type="match status" value="1"/>
</dbReference>
<dbReference type="SUPFAM" id="SSF46946">
    <property type="entry name" value="S13-like H2TH domain"/>
    <property type="match status" value="1"/>
</dbReference>
<dbReference type="PROSITE" id="PS00646">
    <property type="entry name" value="RIBOSOMAL_S13_1"/>
    <property type="match status" value="1"/>
</dbReference>
<dbReference type="PROSITE" id="PS50159">
    <property type="entry name" value="RIBOSOMAL_S13_2"/>
    <property type="match status" value="1"/>
</dbReference>
<name>RS13_DEIDV</name>